<evidence type="ECO:0000255" key="1">
    <source>
        <dbReference type="HAMAP-Rule" id="MF_00600"/>
    </source>
</evidence>
<accession>A0JT07</accession>
<keyword id="KW-0067">ATP-binding</keyword>
<keyword id="KW-0143">Chaperone</keyword>
<keyword id="KW-0963">Cytoplasm</keyword>
<keyword id="KW-0413">Isomerase</keyword>
<keyword id="KW-0547">Nucleotide-binding</keyword>
<keyword id="KW-1185">Reference proteome</keyword>
<feature type="chain" id="PRO_0000331968" description="Chaperonin GroEL 1">
    <location>
        <begin position="1"/>
        <end position="545"/>
    </location>
</feature>
<feature type="binding site" evidence="1">
    <location>
        <begin position="29"/>
        <end position="32"/>
    </location>
    <ligand>
        <name>ATP</name>
        <dbReference type="ChEBI" id="CHEBI:30616"/>
    </ligand>
</feature>
<feature type="binding site" evidence="1">
    <location>
        <begin position="86"/>
        <end position="90"/>
    </location>
    <ligand>
        <name>ATP</name>
        <dbReference type="ChEBI" id="CHEBI:30616"/>
    </ligand>
</feature>
<feature type="binding site" evidence="1">
    <location>
        <position position="413"/>
    </location>
    <ligand>
        <name>ATP</name>
        <dbReference type="ChEBI" id="CHEBI:30616"/>
    </ligand>
</feature>
<feature type="binding site" evidence="1">
    <location>
        <begin position="477"/>
        <end position="479"/>
    </location>
    <ligand>
        <name>ATP</name>
        <dbReference type="ChEBI" id="CHEBI:30616"/>
    </ligand>
</feature>
<feature type="binding site" evidence="1">
    <location>
        <position position="493"/>
    </location>
    <ligand>
        <name>ATP</name>
        <dbReference type="ChEBI" id="CHEBI:30616"/>
    </ligand>
</feature>
<name>CH601_ARTS2</name>
<sequence length="545" mass="56998">MAKIIAFDEEARRGLERGLNILADAVKVTLGPRGRNVVLEKKWGAPTITNDGVSIAKEIELDDPYEKIGAELVKEVAKKTDDVAGDGTTTATVLAQALVKEGLRNVAAGADPLSLKRGIEKAVEAVTAELLASAKEIETKEEIAATASISAGDDEIGALIAEALDKVGKEGVITVEESNTFGLELELTEGMRFDKGYISAYFVTDAERQETVLEDPYILIVNSKISNVKELVAVLEKVMQSNKPLLIIAEDIEGEALATLIVNKIRGTFKSVAVKAPGFGDRRKAQLADIAILTGGQVISEEVGLKLETAGLELLGKARKVVVTKDETTIVEGAGDADQIAGRVSQIRSEIENSDSDYDREKLQERLAKLAGGVAVIKAGAATEVELKERKHRIEDAVRNAKAAVEEGIVAGGGVALIQAGAKAFANLQLEGDEATGANIVRVAIDAPLKQIAFNAGLEPGVVVDKVRGLPAGHGLNAATGQYVDLLAAGINDPVKVTRSALQNAASIAGLFLTTEAVVADKPEKNAPAMGGGDDMGGMGGMGGF</sequence>
<proteinExistence type="inferred from homology"/>
<comment type="function">
    <text evidence="1">Together with its co-chaperonin GroES, plays an essential role in assisting protein folding. The GroEL-GroES system forms a nano-cage that allows encapsulation of the non-native substrate proteins and provides a physical environment optimized to promote and accelerate protein folding.</text>
</comment>
<comment type="catalytic activity">
    <reaction evidence="1">
        <text>ATP + H2O + a folded polypeptide = ADP + phosphate + an unfolded polypeptide.</text>
        <dbReference type="EC" id="5.6.1.7"/>
    </reaction>
</comment>
<comment type="subunit">
    <text evidence="1">Forms a cylinder of 14 subunits composed of two heptameric rings stacked back-to-back. Interacts with the co-chaperonin GroES.</text>
</comment>
<comment type="subcellular location">
    <subcellularLocation>
        <location evidence="1">Cytoplasm</location>
    </subcellularLocation>
</comment>
<comment type="similarity">
    <text evidence="1">Belongs to the chaperonin (HSP60) family.</text>
</comment>
<reference key="1">
    <citation type="journal article" date="2013" name="Stand. Genomic Sci.">
        <title>Complete genome sequence of Arthrobacter sp. strain FB24.</title>
        <authorList>
            <person name="Nakatsu C.H."/>
            <person name="Barabote R."/>
            <person name="Thompson S."/>
            <person name="Bruce D."/>
            <person name="Detter C."/>
            <person name="Brettin T."/>
            <person name="Han C."/>
            <person name="Beasley F."/>
            <person name="Chen W."/>
            <person name="Konopka A."/>
            <person name="Xie G."/>
        </authorList>
    </citation>
    <scope>NUCLEOTIDE SEQUENCE [LARGE SCALE GENOMIC DNA]</scope>
    <source>
        <strain>FB24</strain>
    </source>
</reference>
<dbReference type="EC" id="5.6.1.7" evidence="1"/>
<dbReference type="EMBL" id="CP000454">
    <property type="protein sequence ID" value="ABK02177.1"/>
    <property type="molecule type" value="Genomic_DNA"/>
</dbReference>
<dbReference type="RefSeq" id="WP_011690644.1">
    <property type="nucleotide sequence ID" value="NC_008541.1"/>
</dbReference>
<dbReference type="SMR" id="A0JT07"/>
<dbReference type="STRING" id="290399.Arth_0779"/>
<dbReference type="KEGG" id="art:Arth_0779"/>
<dbReference type="eggNOG" id="COG0459">
    <property type="taxonomic scope" value="Bacteria"/>
</dbReference>
<dbReference type="HOGENOM" id="CLU_016503_3_0_11"/>
<dbReference type="OrthoDB" id="9766614at2"/>
<dbReference type="Proteomes" id="UP000000754">
    <property type="component" value="Chromosome"/>
</dbReference>
<dbReference type="GO" id="GO:0005737">
    <property type="term" value="C:cytoplasm"/>
    <property type="evidence" value="ECO:0007669"/>
    <property type="project" value="UniProtKB-SubCell"/>
</dbReference>
<dbReference type="GO" id="GO:0005524">
    <property type="term" value="F:ATP binding"/>
    <property type="evidence" value="ECO:0007669"/>
    <property type="project" value="UniProtKB-UniRule"/>
</dbReference>
<dbReference type="GO" id="GO:0140662">
    <property type="term" value="F:ATP-dependent protein folding chaperone"/>
    <property type="evidence" value="ECO:0007669"/>
    <property type="project" value="InterPro"/>
</dbReference>
<dbReference type="GO" id="GO:0016853">
    <property type="term" value="F:isomerase activity"/>
    <property type="evidence" value="ECO:0007669"/>
    <property type="project" value="UniProtKB-KW"/>
</dbReference>
<dbReference type="GO" id="GO:0051082">
    <property type="term" value="F:unfolded protein binding"/>
    <property type="evidence" value="ECO:0007669"/>
    <property type="project" value="UniProtKB-UniRule"/>
</dbReference>
<dbReference type="GO" id="GO:0042026">
    <property type="term" value="P:protein refolding"/>
    <property type="evidence" value="ECO:0007669"/>
    <property type="project" value="UniProtKB-UniRule"/>
</dbReference>
<dbReference type="CDD" id="cd03344">
    <property type="entry name" value="GroEL"/>
    <property type="match status" value="1"/>
</dbReference>
<dbReference type="FunFam" id="3.50.7.10:FF:000001">
    <property type="entry name" value="60 kDa chaperonin"/>
    <property type="match status" value="1"/>
</dbReference>
<dbReference type="Gene3D" id="3.50.7.10">
    <property type="entry name" value="GroEL"/>
    <property type="match status" value="1"/>
</dbReference>
<dbReference type="Gene3D" id="1.10.560.10">
    <property type="entry name" value="GroEL-like equatorial domain"/>
    <property type="match status" value="1"/>
</dbReference>
<dbReference type="Gene3D" id="3.30.260.10">
    <property type="entry name" value="TCP-1-like chaperonin intermediate domain"/>
    <property type="match status" value="1"/>
</dbReference>
<dbReference type="HAMAP" id="MF_00600">
    <property type="entry name" value="CH60"/>
    <property type="match status" value="1"/>
</dbReference>
<dbReference type="InterPro" id="IPR018370">
    <property type="entry name" value="Chaperonin_Cpn60_CS"/>
</dbReference>
<dbReference type="InterPro" id="IPR001844">
    <property type="entry name" value="Cpn60/GroEL"/>
</dbReference>
<dbReference type="InterPro" id="IPR002423">
    <property type="entry name" value="Cpn60/GroEL/TCP-1"/>
</dbReference>
<dbReference type="InterPro" id="IPR027409">
    <property type="entry name" value="GroEL-like_apical_dom_sf"/>
</dbReference>
<dbReference type="InterPro" id="IPR027413">
    <property type="entry name" value="GROEL-like_equatorial_sf"/>
</dbReference>
<dbReference type="InterPro" id="IPR027410">
    <property type="entry name" value="TCP-1-like_intermed_sf"/>
</dbReference>
<dbReference type="NCBIfam" id="TIGR02348">
    <property type="entry name" value="GroEL"/>
    <property type="match status" value="1"/>
</dbReference>
<dbReference type="NCBIfam" id="NF000592">
    <property type="entry name" value="PRK00013.1"/>
    <property type="match status" value="1"/>
</dbReference>
<dbReference type="NCBIfam" id="NF009487">
    <property type="entry name" value="PRK12849.1"/>
    <property type="match status" value="1"/>
</dbReference>
<dbReference type="NCBIfam" id="NF009488">
    <property type="entry name" value="PRK12850.1"/>
    <property type="match status" value="1"/>
</dbReference>
<dbReference type="NCBIfam" id="NF009489">
    <property type="entry name" value="PRK12851.1"/>
    <property type="match status" value="1"/>
</dbReference>
<dbReference type="PANTHER" id="PTHR45633">
    <property type="entry name" value="60 KDA HEAT SHOCK PROTEIN, MITOCHONDRIAL"/>
    <property type="match status" value="1"/>
</dbReference>
<dbReference type="Pfam" id="PF00118">
    <property type="entry name" value="Cpn60_TCP1"/>
    <property type="match status" value="1"/>
</dbReference>
<dbReference type="PRINTS" id="PR00298">
    <property type="entry name" value="CHAPERONIN60"/>
</dbReference>
<dbReference type="SUPFAM" id="SSF52029">
    <property type="entry name" value="GroEL apical domain-like"/>
    <property type="match status" value="1"/>
</dbReference>
<dbReference type="SUPFAM" id="SSF48592">
    <property type="entry name" value="GroEL equatorial domain-like"/>
    <property type="match status" value="1"/>
</dbReference>
<dbReference type="SUPFAM" id="SSF54849">
    <property type="entry name" value="GroEL-intermediate domain like"/>
    <property type="match status" value="1"/>
</dbReference>
<dbReference type="PROSITE" id="PS00296">
    <property type="entry name" value="CHAPERONINS_CPN60"/>
    <property type="match status" value="1"/>
</dbReference>
<protein>
    <recommendedName>
        <fullName evidence="1">Chaperonin GroEL 1</fullName>
        <ecNumber evidence="1">5.6.1.7</ecNumber>
    </recommendedName>
    <alternativeName>
        <fullName evidence="1">60 kDa chaperonin 1</fullName>
    </alternativeName>
    <alternativeName>
        <fullName evidence="1">Chaperonin-60 1</fullName>
        <shortName evidence="1">Cpn60 1</shortName>
    </alternativeName>
</protein>
<gene>
    <name evidence="1" type="primary">groEL1</name>
    <name evidence="1" type="synonym">groL1</name>
    <name type="ordered locus">Arth_0779</name>
</gene>
<organism>
    <name type="scientific">Arthrobacter sp. (strain FB24)</name>
    <dbReference type="NCBI Taxonomy" id="290399"/>
    <lineage>
        <taxon>Bacteria</taxon>
        <taxon>Bacillati</taxon>
        <taxon>Actinomycetota</taxon>
        <taxon>Actinomycetes</taxon>
        <taxon>Micrococcales</taxon>
        <taxon>Micrococcaceae</taxon>
        <taxon>Arthrobacter</taxon>
    </lineage>
</organism>